<comment type="function">
    <text evidence="1">Transfers the 4'-phosphopantetheine moiety from coenzyme A to a Ser of acyl-carrier-protein.</text>
</comment>
<comment type="catalytic activity">
    <reaction evidence="1">
        <text>apo-[ACP] + CoA = holo-[ACP] + adenosine 3',5'-bisphosphate + H(+)</text>
        <dbReference type="Rhea" id="RHEA:12068"/>
        <dbReference type="Rhea" id="RHEA-COMP:9685"/>
        <dbReference type="Rhea" id="RHEA-COMP:9690"/>
        <dbReference type="ChEBI" id="CHEBI:15378"/>
        <dbReference type="ChEBI" id="CHEBI:29999"/>
        <dbReference type="ChEBI" id="CHEBI:57287"/>
        <dbReference type="ChEBI" id="CHEBI:58343"/>
        <dbReference type="ChEBI" id="CHEBI:64479"/>
        <dbReference type="EC" id="2.7.8.7"/>
    </reaction>
</comment>
<comment type="cofactor">
    <cofactor evidence="1">
        <name>Mg(2+)</name>
        <dbReference type="ChEBI" id="CHEBI:18420"/>
    </cofactor>
</comment>
<comment type="subcellular location">
    <subcellularLocation>
        <location evidence="1">Cytoplasm</location>
    </subcellularLocation>
</comment>
<comment type="similarity">
    <text evidence="1">Belongs to the P-Pant transferase superfamily. AcpS family.</text>
</comment>
<dbReference type="EC" id="2.7.8.7" evidence="1"/>
<dbReference type="EMBL" id="CP000896">
    <property type="protein sequence ID" value="ABX81933.1"/>
    <property type="molecule type" value="Genomic_DNA"/>
</dbReference>
<dbReference type="RefSeq" id="WP_012243264.1">
    <property type="nucleotide sequence ID" value="NC_010163.1"/>
</dbReference>
<dbReference type="SMR" id="A9NHV3"/>
<dbReference type="STRING" id="441768.ACL_1341"/>
<dbReference type="GeneID" id="41339472"/>
<dbReference type="KEGG" id="acl:ACL_1341"/>
<dbReference type="eggNOG" id="COG0736">
    <property type="taxonomic scope" value="Bacteria"/>
</dbReference>
<dbReference type="HOGENOM" id="CLU_089696_1_2_14"/>
<dbReference type="OrthoDB" id="389495at2"/>
<dbReference type="Proteomes" id="UP000008558">
    <property type="component" value="Chromosome"/>
</dbReference>
<dbReference type="GO" id="GO:0005737">
    <property type="term" value="C:cytoplasm"/>
    <property type="evidence" value="ECO:0007669"/>
    <property type="project" value="UniProtKB-SubCell"/>
</dbReference>
<dbReference type="GO" id="GO:0008897">
    <property type="term" value="F:holo-[acyl-carrier-protein] synthase activity"/>
    <property type="evidence" value="ECO:0007669"/>
    <property type="project" value="UniProtKB-UniRule"/>
</dbReference>
<dbReference type="GO" id="GO:0000287">
    <property type="term" value="F:magnesium ion binding"/>
    <property type="evidence" value="ECO:0007669"/>
    <property type="project" value="UniProtKB-UniRule"/>
</dbReference>
<dbReference type="GO" id="GO:0006633">
    <property type="term" value="P:fatty acid biosynthetic process"/>
    <property type="evidence" value="ECO:0007669"/>
    <property type="project" value="UniProtKB-UniRule"/>
</dbReference>
<dbReference type="Gene3D" id="3.90.470.20">
    <property type="entry name" value="4'-phosphopantetheinyl transferase domain"/>
    <property type="match status" value="1"/>
</dbReference>
<dbReference type="HAMAP" id="MF_00101">
    <property type="entry name" value="AcpS"/>
    <property type="match status" value="1"/>
</dbReference>
<dbReference type="InterPro" id="IPR008278">
    <property type="entry name" value="4-PPantetheinyl_Trfase_dom"/>
</dbReference>
<dbReference type="InterPro" id="IPR037143">
    <property type="entry name" value="4-PPantetheinyl_Trfase_dom_sf"/>
</dbReference>
<dbReference type="InterPro" id="IPR002582">
    <property type="entry name" value="ACPS"/>
</dbReference>
<dbReference type="InterPro" id="IPR004568">
    <property type="entry name" value="Ppantetheine-prot_Trfase_dom"/>
</dbReference>
<dbReference type="NCBIfam" id="TIGR00516">
    <property type="entry name" value="acpS"/>
    <property type="match status" value="1"/>
</dbReference>
<dbReference type="NCBIfam" id="TIGR00556">
    <property type="entry name" value="pantethn_trn"/>
    <property type="match status" value="1"/>
</dbReference>
<dbReference type="Pfam" id="PF01648">
    <property type="entry name" value="ACPS"/>
    <property type="match status" value="1"/>
</dbReference>
<dbReference type="SUPFAM" id="SSF56214">
    <property type="entry name" value="4'-phosphopantetheinyl transferase"/>
    <property type="match status" value="1"/>
</dbReference>
<keyword id="KW-0963">Cytoplasm</keyword>
<keyword id="KW-0275">Fatty acid biosynthesis</keyword>
<keyword id="KW-0276">Fatty acid metabolism</keyword>
<keyword id="KW-0444">Lipid biosynthesis</keyword>
<keyword id="KW-0443">Lipid metabolism</keyword>
<keyword id="KW-0460">Magnesium</keyword>
<keyword id="KW-0479">Metal-binding</keyword>
<keyword id="KW-1185">Reference proteome</keyword>
<keyword id="KW-0808">Transferase</keyword>
<reference key="1">
    <citation type="journal article" date="2011" name="J. Bacteriol.">
        <title>Complete genome and proteome of Acholeplasma laidlawii.</title>
        <authorList>
            <person name="Lazarev V.N."/>
            <person name="Levitskii S.A."/>
            <person name="Basovskii Y.I."/>
            <person name="Chukin M.M."/>
            <person name="Akopian T.A."/>
            <person name="Vereshchagin V.V."/>
            <person name="Kostrjukova E.S."/>
            <person name="Kovaleva G.Y."/>
            <person name="Kazanov M.D."/>
            <person name="Malko D.B."/>
            <person name="Vitreschak A.G."/>
            <person name="Sernova N.V."/>
            <person name="Gelfand M.S."/>
            <person name="Demina I.A."/>
            <person name="Serebryakova M.V."/>
            <person name="Galyamina M.A."/>
            <person name="Vtyurin N.N."/>
            <person name="Rogov S.I."/>
            <person name="Alexeev D.G."/>
            <person name="Ladygina V.G."/>
            <person name="Govorun V.M."/>
        </authorList>
    </citation>
    <scope>NUCLEOTIDE SEQUENCE [LARGE SCALE GENOMIC DNA]</scope>
    <source>
        <strain>PG-8A</strain>
    </source>
</reference>
<proteinExistence type="inferred from homology"/>
<gene>
    <name evidence="1" type="primary">acpS</name>
    <name type="ordered locus">ACL_1341</name>
</gene>
<accession>A9NHV3</accession>
<organism>
    <name type="scientific">Acholeplasma laidlawii (strain PG-8A)</name>
    <dbReference type="NCBI Taxonomy" id="441768"/>
    <lineage>
        <taxon>Bacteria</taxon>
        <taxon>Bacillati</taxon>
        <taxon>Mycoplasmatota</taxon>
        <taxon>Mollicutes</taxon>
        <taxon>Acholeplasmatales</taxon>
        <taxon>Acholeplasmataceae</taxon>
        <taxon>Acholeplasma</taxon>
    </lineage>
</organism>
<sequence length="118" mass="13407">MIHAIGTDLVELERIKSIGIDRFKDKILNEDEKNEYAKINHENRKLTYLAGRFAVKESLFKCFKAGDKTANYKDFSVLNDSVGAPYVVSKHTSDFVVHITISHTNLYAIAFVVLETKV</sequence>
<name>ACPS_ACHLI</name>
<protein>
    <recommendedName>
        <fullName evidence="1">Holo-[acyl-carrier-protein] synthase</fullName>
        <shortName evidence="1">Holo-ACP synthase</shortName>
        <ecNumber evidence="1">2.7.8.7</ecNumber>
    </recommendedName>
    <alternativeName>
        <fullName evidence="1">4'-phosphopantetheinyl transferase AcpS</fullName>
    </alternativeName>
</protein>
<evidence type="ECO:0000255" key="1">
    <source>
        <dbReference type="HAMAP-Rule" id="MF_00101"/>
    </source>
</evidence>
<feature type="chain" id="PRO_1000075627" description="Holo-[acyl-carrier-protein] synthase">
    <location>
        <begin position="1"/>
        <end position="118"/>
    </location>
</feature>
<feature type="binding site" evidence="1">
    <location>
        <position position="8"/>
    </location>
    <ligand>
        <name>Mg(2+)</name>
        <dbReference type="ChEBI" id="CHEBI:18420"/>
    </ligand>
</feature>
<feature type="binding site" evidence="1">
    <location>
        <position position="57"/>
    </location>
    <ligand>
        <name>Mg(2+)</name>
        <dbReference type="ChEBI" id="CHEBI:18420"/>
    </ligand>
</feature>